<comment type="function">
    <text evidence="1">Nucleotidyltransferase involved in the post-translational modification of proteins. It can catalyze the addition of adenosine monophosphate (AMP) or uridine monophosphate (UMP) to a protein, resulting in modifications known as AMPylation and UMPylation.</text>
</comment>
<comment type="catalytic activity">
    <reaction evidence="1">
        <text>L-seryl-[protein] + ATP = 3-O-(5'-adenylyl)-L-seryl-[protein] + diphosphate</text>
        <dbReference type="Rhea" id="RHEA:58120"/>
        <dbReference type="Rhea" id="RHEA-COMP:9863"/>
        <dbReference type="Rhea" id="RHEA-COMP:15073"/>
        <dbReference type="ChEBI" id="CHEBI:29999"/>
        <dbReference type="ChEBI" id="CHEBI:30616"/>
        <dbReference type="ChEBI" id="CHEBI:33019"/>
        <dbReference type="ChEBI" id="CHEBI:142516"/>
        <dbReference type="EC" id="2.7.7.108"/>
    </reaction>
</comment>
<comment type="catalytic activity">
    <reaction evidence="1">
        <text>L-threonyl-[protein] + ATP = 3-O-(5'-adenylyl)-L-threonyl-[protein] + diphosphate</text>
        <dbReference type="Rhea" id="RHEA:54292"/>
        <dbReference type="Rhea" id="RHEA-COMP:11060"/>
        <dbReference type="Rhea" id="RHEA-COMP:13847"/>
        <dbReference type="ChEBI" id="CHEBI:30013"/>
        <dbReference type="ChEBI" id="CHEBI:30616"/>
        <dbReference type="ChEBI" id="CHEBI:33019"/>
        <dbReference type="ChEBI" id="CHEBI:138113"/>
        <dbReference type="EC" id="2.7.7.108"/>
    </reaction>
</comment>
<comment type="catalytic activity">
    <reaction evidence="1">
        <text>L-tyrosyl-[protein] + ATP = O-(5'-adenylyl)-L-tyrosyl-[protein] + diphosphate</text>
        <dbReference type="Rhea" id="RHEA:54288"/>
        <dbReference type="Rhea" id="RHEA-COMP:10136"/>
        <dbReference type="Rhea" id="RHEA-COMP:13846"/>
        <dbReference type="ChEBI" id="CHEBI:30616"/>
        <dbReference type="ChEBI" id="CHEBI:33019"/>
        <dbReference type="ChEBI" id="CHEBI:46858"/>
        <dbReference type="ChEBI" id="CHEBI:83624"/>
        <dbReference type="EC" id="2.7.7.108"/>
    </reaction>
</comment>
<comment type="catalytic activity">
    <reaction evidence="1">
        <text>L-histidyl-[protein] + UTP = N(tele)-(5'-uridylyl)-L-histidyl-[protein] + diphosphate</text>
        <dbReference type="Rhea" id="RHEA:83891"/>
        <dbReference type="Rhea" id="RHEA-COMP:9745"/>
        <dbReference type="Rhea" id="RHEA-COMP:20239"/>
        <dbReference type="ChEBI" id="CHEBI:29979"/>
        <dbReference type="ChEBI" id="CHEBI:33019"/>
        <dbReference type="ChEBI" id="CHEBI:46398"/>
        <dbReference type="ChEBI" id="CHEBI:233474"/>
    </reaction>
</comment>
<comment type="catalytic activity">
    <reaction evidence="1">
        <text>L-seryl-[protein] + UTP = O-(5'-uridylyl)-L-seryl-[protein] + diphosphate</text>
        <dbReference type="Rhea" id="RHEA:64604"/>
        <dbReference type="Rhea" id="RHEA-COMP:9863"/>
        <dbReference type="Rhea" id="RHEA-COMP:16635"/>
        <dbReference type="ChEBI" id="CHEBI:29999"/>
        <dbReference type="ChEBI" id="CHEBI:33019"/>
        <dbReference type="ChEBI" id="CHEBI:46398"/>
        <dbReference type="ChEBI" id="CHEBI:156051"/>
    </reaction>
</comment>
<comment type="catalytic activity">
    <reaction evidence="1">
        <text>L-tyrosyl-[protein] + UTP = O-(5'-uridylyl)-L-tyrosyl-[protein] + diphosphate</text>
        <dbReference type="Rhea" id="RHEA:83887"/>
        <dbReference type="Rhea" id="RHEA-COMP:10136"/>
        <dbReference type="Rhea" id="RHEA-COMP:20238"/>
        <dbReference type="ChEBI" id="CHEBI:33019"/>
        <dbReference type="ChEBI" id="CHEBI:46398"/>
        <dbReference type="ChEBI" id="CHEBI:46858"/>
        <dbReference type="ChEBI" id="CHEBI:90602"/>
    </reaction>
</comment>
<comment type="cofactor">
    <cofactor evidence="1">
        <name>Mg(2+)</name>
        <dbReference type="ChEBI" id="CHEBI:18420"/>
    </cofactor>
    <cofactor evidence="1">
        <name>Mn(2+)</name>
        <dbReference type="ChEBI" id="CHEBI:29035"/>
    </cofactor>
</comment>
<comment type="similarity">
    <text evidence="1">Belongs to the SELO family.</text>
</comment>
<keyword id="KW-0067">ATP-binding</keyword>
<keyword id="KW-0460">Magnesium</keyword>
<keyword id="KW-0464">Manganese</keyword>
<keyword id="KW-0479">Metal-binding</keyword>
<keyword id="KW-0547">Nucleotide-binding</keyword>
<keyword id="KW-0548">Nucleotidyltransferase</keyword>
<keyword id="KW-0808">Transferase</keyword>
<organism>
    <name type="scientific">Yersinia pseudotuberculosis serotype O:1b (strain IP 31758)</name>
    <dbReference type="NCBI Taxonomy" id="349747"/>
    <lineage>
        <taxon>Bacteria</taxon>
        <taxon>Pseudomonadati</taxon>
        <taxon>Pseudomonadota</taxon>
        <taxon>Gammaproteobacteria</taxon>
        <taxon>Enterobacterales</taxon>
        <taxon>Yersiniaceae</taxon>
        <taxon>Yersinia</taxon>
    </lineage>
</organism>
<evidence type="ECO:0000255" key="1">
    <source>
        <dbReference type="HAMAP-Rule" id="MF_00692"/>
    </source>
</evidence>
<dbReference type="EC" id="2.7.7.-" evidence="1"/>
<dbReference type="EC" id="2.7.7.108" evidence="1"/>
<dbReference type="EMBL" id="CP000720">
    <property type="protein sequence ID" value="ABS47929.1"/>
    <property type="molecule type" value="Genomic_DNA"/>
</dbReference>
<dbReference type="SMR" id="A7FHI1"/>
<dbReference type="KEGG" id="ypi:YpsIP31758_1734"/>
<dbReference type="HOGENOM" id="CLU_010245_4_0_6"/>
<dbReference type="Proteomes" id="UP000002412">
    <property type="component" value="Chromosome"/>
</dbReference>
<dbReference type="GO" id="GO:0070733">
    <property type="term" value="F:AMPylase activity"/>
    <property type="evidence" value="ECO:0007669"/>
    <property type="project" value="RHEA"/>
</dbReference>
<dbReference type="GO" id="GO:0005524">
    <property type="term" value="F:ATP binding"/>
    <property type="evidence" value="ECO:0007669"/>
    <property type="project" value="UniProtKB-UniRule"/>
</dbReference>
<dbReference type="GO" id="GO:0000287">
    <property type="term" value="F:magnesium ion binding"/>
    <property type="evidence" value="ECO:0007669"/>
    <property type="project" value="UniProtKB-UniRule"/>
</dbReference>
<dbReference type="HAMAP" id="MF_00692">
    <property type="entry name" value="YdiU_SelO"/>
    <property type="match status" value="1"/>
</dbReference>
<dbReference type="InterPro" id="IPR003846">
    <property type="entry name" value="SelO"/>
</dbReference>
<dbReference type="NCBIfam" id="NF000658">
    <property type="entry name" value="PRK00029.1"/>
    <property type="match status" value="1"/>
</dbReference>
<dbReference type="PANTHER" id="PTHR32057">
    <property type="entry name" value="PROTEIN ADENYLYLTRANSFERASE SELO, MITOCHONDRIAL"/>
    <property type="match status" value="1"/>
</dbReference>
<dbReference type="PANTHER" id="PTHR32057:SF14">
    <property type="entry name" value="PROTEIN ADENYLYLTRANSFERASE SELO, MITOCHONDRIAL"/>
    <property type="match status" value="1"/>
</dbReference>
<dbReference type="Pfam" id="PF02696">
    <property type="entry name" value="SelO"/>
    <property type="match status" value="1"/>
</dbReference>
<gene>
    <name evidence="1" type="primary">ydiU</name>
    <name evidence="1" type="synonym">selO</name>
    <name type="ordered locus">YpsIP31758_1734</name>
</gene>
<reference key="1">
    <citation type="journal article" date="2007" name="PLoS Genet.">
        <title>The complete genome sequence of Yersinia pseudotuberculosis IP31758, the causative agent of Far East scarlet-like fever.</title>
        <authorList>
            <person name="Eppinger M."/>
            <person name="Rosovitz M.J."/>
            <person name="Fricke W.F."/>
            <person name="Rasko D.A."/>
            <person name="Kokorina G."/>
            <person name="Fayolle C."/>
            <person name="Lindler L.E."/>
            <person name="Carniel E."/>
            <person name="Ravel J."/>
        </authorList>
    </citation>
    <scope>NUCLEOTIDE SEQUENCE [LARGE SCALE GENOMIC DNA]</scope>
    <source>
        <strain>IP 31758</strain>
    </source>
</reference>
<accession>A7FHI1</accession>
<feature type="chain" id="PRO_1000062034" description="Protein nucleotidyltransferase YdiU">
    <location>
        <begin position="1"/>
        <end position="483"/>
    </location>
</feature>
<feature type="active site" description="Proton acceptor" evidence="1">
    <location>
        <position position="249"/>
    </location>
</feature>
<feature type="binding site" evidence="1">
    <location>
        <position position="87"/>
    </location>
    <ligand>
        <name>ATP</name>
        <dbReference type="ChEBI" id="CHEBI:30616"/>
    </ligand>
</feature>
<feature type="binding site" evidence="1">
    <location>
        <position position="89"/>
    </location>
    <ligand>
        <name>ATP</name>
        <dbReference type="ChEBI" id="CHEBI:30616"/>
    </ligand>
</feature>
<feature type="binding site" evidence="1">
    <location>
        <position position="90"/>
    </location>
    <ligand>
        <name>ATP</name>
        <dbReference type="ChEBI" id="CHEBI:30616"/>
    </ligand>
</feature>
<feature type="binding site" evidence="1">
    <location>
        <position position="110"/>
    </location>
    <ligand>
        <name>ATP</name>
        <dbReference type="ChEBI" id="CHEBI:30616"/>
    </ligand>
</feature>
<feature type="binding site" evidence="1">
    <location>
        <position position="122"/>
    </location>
    <ligand>
        <name>ATP</name>
        <dbReference type="ChEBI" id="CHEBI:30616"/>
    </ligand>
</feature>
<feature type="binding site" evidence="1">
    <location>
        <position position="123"/>
    </location>
    <ligand>
        <name>ATP</name>
        <dbReference type="ChEBI" id="CHEBI:30616"/>
    </ligand>
</feature>
<feature type="binding site" evidence="1">
    <location>
        <position position="173"/>
    </location>
    <ligand>
        <name>ATP</name>
        <dbReference type="ChEBI" id="CHEBI:30616"/>
    </ligand>
</feature>
<feature type="binding site" evidence="1">
    <location>
        <position position="180"/>
    </location>
    <ligand>
        <name>ATP</name>
        <dbReference type="ChEBI" id="CHEBI:30616"/>
    </ligand>
</feature>
<feature type="binding site" evidence="1">
    <location>
        <position position="250"/>
    </location>
    <ligand>
        <name>Mg(2+)</name>
        <dbReference type="ChEBI" id="CHEBI:18420"/>
    </ligand>
</feature>
<feature type="binding site" evidence="1">
    <location>
        <position position="259"/>
    </location>
    <ligand>
        <name>ATP</name>
        <dbReference type="ChEBI" id="CHEBI:30616"/>
    </ligand>
</feature>
<feature type="binding site" evidence="1">
    <location>
        <position position="259"/>
    </location>
    <ligand>
        <name>Mg(2+)</name>
        <dbReference type="ChEBI" id="CHEBI:18420"/>
    </ligand>
</feature>
<proteinExistence type="inferred from homology"/>
<sequence>MEYAPEFDNSYARQLSGFYTRLQPTPLKGARLLYHSKPLAQELGLDAHWFTEPKTAVWAGEALLPGMEPLAQVYSGHQFGMWAGQLGDGRGILLGEQRLNDGRYMDWHLKGAGLTPYSRMGDGRAVLRSVIREFLASEALHHLGIPTSRALTIVTSDHPIYREQTERGAMLLRVAESHIRFGHFEHFYYRQQPKQVQQLADYVIARHWPQWVGHQECYRLWFTDVVERTARLMAHWQTVGFAHGVMNTDNMSILGITMDYGPFGFLDDYVPGYICNHSDHQGRYAYDNQPAVALWNLHRLGHALSGLMSADQLQLALEAYEPALMVAYGEQMRAKLGFLERDSQDNDLLTGLLSLMIKEGRDYTRTFRLLSEVEVHSAQSPLRDDFIDRAAFDDWYRRYRSRLQQESIDDDQRQQSMKAANPKYILRNYLAQQAITQAEKDDIQPLQRLHQALQQPFTDQPEFDDLAALPPDWGKHLEISCSS</sequence>
<name>SELO_YERP3</name>
<protein>
    <recommendedName>
        <fullName evidence="1">Protein nucleotidyltransferase YdiU</fullName>
        <ecNumber evidence="1">2.7.7.-</ecNumber>
    </recommendedName>
    <alternativeName>
        <fullName evidence="1">Protein adenylyltransferase YdiU</fullName>
        <ecNumber evidence="1">2.7.7.108</ecNumber>
    </alternativeName>
    <alternativeName>
        <fullName evidence="1">Protein uridylyltransferase YdiU</fullName>
        <ecNumber evidence="1">2.7.7.-</ecNumber>
    </alternativeName>
</protein>